<accession>O43078</accession>
<feature type="chain" id="PRO_0000290650" description="ATPase-like fidgetin">
    <location>
        <begin position="1"/>
        <end position="660"/>
    </location>
</feature>
<feature type="region of interest" description="Disordered" evidence="2">
    <location>
        <begin position="141"/>
        <end position="186"/>
    </location>
</feature>
<feature type="region of interest" description="Disordered" evidence="2">
    <location>
        <begin position="209"/>
        <end position="334"/>
    </location>
</feature>
<feature type="compositionally biased region" description="Low complexity" evidence="2">
    <location>
        <begin position="145"/>
        <end position="161"/>
    </location>
</feature>
<feature type="compositionally biased region" description="Polar residues" evidence="2">
    <location>
        <begin position="213"/>
        <end position="239"/>
    </location>
</feature>
<feature type="compositionally biased region" description="Low complexity" evidence="2">
    <location>
        <begin position="240"/>
        <end position="255"/>
    </location>
</feature>
<feature type="compositionally biased region" description="Polar residues" evidence="2">
    <location>
        <begin position="301"/>
        <end position="313"/>
    </location>
</feature>
<feature type="compositionally biased region" description="Low complexity" evidence="2">
    <location>
        <begin position="314"/>
        <end position="333"/>
    </location>
</feature>
<feature type="binding site" evidence="1">
    <location>
        <begin position="419"/>
        <end position="426"/>
    </location>
    <ligand>
        <name>ATP</name>
        <dbReference type="ChEBI" id="CHEBI:30616"/>
    </ligand>
</feature>
<feature type="modified residue" description="Phosphoserine" evidence="4">
    <location>
        <position position="177"/>
    </location>
</feature>
<proteinExistence type="evidence at protein level"/>
<keyword id="KW-0067">ATP-binding</keyword>
<keyword id="KW-0547">Nucleotide-binding</keyword>
<keyword id="KW-0539">Nucleus</keyword>
<keyword id="KW-0597">Phosphoprotein</keyword>
<keyword id="KW-1185">Reference proteome</keyword>
<reference key="1">
    <citation type="journal article" date="2002" name="Nature">
        <title>The genome sequence of Schizosaccharomyces pombe.</title>
        <authorList>
            <person name="Wood V."/>
            <person name="Gwilliam R."/>
            <person name="Rajandream M.A."/>
            <person name="Lyne M.H."/>
            <person name="Lyne R."/>
            <person name="Stewart A."/>
            <person name="Sgouros J.G."/>
            <person name="Peat N."/>
            <person name="Hayles J."/>
            <person name="Baker S.G."/>
            <person name="Basham D."/>
            <person name="Bowman S."/>
            <person name="Brooks K."/>
            <person name="Brown D."/>
            <person name="Brown S."/>
            <person name="Chillingworth T."/>
            <person name="Churcher C.M."/>
            <person name="Collins M."/>
            <person name="Connor R."/>
            <person name="Cronin A."/>
            <person name="Davis P."/>
            <person name="Feltwell T."/>
            <person name="Fraser A."/>
            <person name="Gentles S."/>
            <person name="Goble A."/>
            <person name="Hamlin N."/>
            <person name="Harris D.E."/>
            <person name="Hidalgo J."/>
            <person name="Hodgson G."/>
            <person name="Holroyd S."/>
            <person name="Hornsby T."/>
            <person name="Howarth S."/>
            <person name="Huckle E.J."/>
            <person name="Hunt S."/>
            <person name="Jagels K."/>
            <person name="James K.D."/>
            <person name="Jones L."/>
            <person name="Jones M."/>
            <person name="Leather S."/>
            <person name="McDonald S."/>
            <person name="McLean J."/>
            <person name="Mooney P."/>
            <person name="Moule S."/>
            <person name="Mungall K.L."/>
            <person name="Murphy L.D."/>
            <person name="Niblett D."/>
            <person name="Odell C."/>
            <person name="Oliver K."/>
            <person name="O'Neil S."/>
            <person name="Pearson D."/>
            <person name="Quail M.A."/>
            <person name="Rabbinowitsch E."/>
            <person name="Rutherford K.M."/>
            <person name="Rutter S."/>
            <person name="Saunders D."/>
            <person name="Seeger K."/>
            <person name="Sharp S."/>
            <person name="Skelton J."/>
            <person name="Simmonds M.N."/>
            <person name="Squares R."/>
            <person name="Squares S."/>
            <person name="Stevens K."/>
            <person name="Taylor K."/>
            <person name="Taylor R.G."/>
            <person name="Tivey A."/>
            <person name="Walsh S.V."/>
            <person name="Warren T."/>
            <person name="Whitehead S."/>
            <person name="Woodward J.R."/>
            <person name="Volckaert G."/>
            <person name="Aert R."/>
            <person name="Robben J."/>
            <person name="Grymonprez B."/>
            <person name="Weltjens I."/>
            <person name="Vanstreels E."/>
            <person name="Rieger M."/>
            <person name="Schaefer M."/>
            <person name="Mueller-Auer S."/>
            <person name="Gabel C."/>
            <person name="Fuchs M."/>
            <person name="Duesterhoeft A."/>
            <person name="Fritzc C."/>
            <person name="Holzer E."/>
            <person name="Moestl D."/>
            <person name="Hilbert H."/>
            <person name="Borzym K."/>
            <person name="Langer I."/>
            <person name="Beck A."/>
            <person name="Lehrach H."/>
            <person name="Reinhardt R."/>
            <person name="Pohl T.M."/>
            <person name="Eger P."/>
            <person name="Zimmermann W."/>
            <person name="Wedler H."/>
            <person name="Wambutt R."/>
            <person name="Purnelle B."/>
            <person name="Goffeau A."/>
            <person name="Cadieu E."/>
            <person name="Dreano S."/>
            <person name="Gloux S."/>
            <person name="Lelaure V."/>
            <person name="Mottier S."/>
            <person name="Galibert F."/>
            <person name="Aves S.J."/>
            <person name="Xiang Z."/>
            <person name="Hunt C."/>
            <person name="Moore K."/>
            <person name="Hurst S.M."/>
            <person name="Lucas M."/>
            <person name="Rochet M."/>
            <person name="Gaillardin C."/>
            <person name="Tallada V.A."/>
            <person name="Garzon A."/>
            <person name="Thode G."/>
            <person name="Daga R.R."/>
            <person name="Cruzado L."/>
            <person name="Jimenez J."/>
            <person name="Sanchez M."/>
            <person name="del Rey F."/>
            <person name="Benito J."/>
            <person name="Dominguez A."/>
            <person name="Revuelta J.L."/>
            <person name="Moreno S."/>
            <person name="Armstrong J."/>
            <person name="Forsburg S.L."/>
            <person name="Cerutti L."/>
            <person name="Lowe T."/>
            <person name="McCombie W.R."/>
            <person name="Paulsen I."/>
            <person name="Potashkin J."/>
            <person name="Shpakovski G.V."/>
            <person name="Ussery D."/>
            <person name="Barrell B.G."/>
            <person name="Nurse P."/>
        </authorList>
    </citation>
    <scope>NUCLEOTIDE SEQUENCE [LARGE SCALE GENOMIC DNA]</scope>
    <source>
        <strain>972 / ATCC 24843</strain>
    </source>
</reference>
<reference key="2">
    <citation type="journal article" date="2006" name="Nat. Biotechnol.">
        <title>ORFeome cloning and global analysis of protein localization in the fission yeast Schizosaccharomyces pombe.</title>
        <authorList>
            <person name="Matsuyama A."/>
            <person name="Arai R."/>
            <person name="Yashiroda Y."/>
            <person name="Shirai A."/>
            <person name="Kamata A."/>
            <person name="Sekido S."/>
            <person name="Kobayashi Y."/>
            <person name="Hashimoto A."/>
            <person name="Hamamoto M."/>
            <person name="Hiraoka Y."/>
            <person name="Horinouchi S."/>
            <person name="Yoshida M."/>
        </authorList>
    </citation>
    <scope>SUBCELLULAR LOCATION [LARGE SCALE ANALYSIS]</scope>
</reference>
<reference key="3">
    <citation type="journal article" date="2008" name="J. Proteome Res.">
        <title>Phosphoproteome analysis of fission yeast.</title>
        <authorList>
            <person name="Wilson-Grady J.T."/>
            <person name="Villen J."/>
            <person name="Gygi S.P."/>
        </authorList>
    </citation>
    <scope>PHOSPHORYLATION [LARGE SCALE ANALYSIS] AT SER-177</scope>
    <scope>IDENTIFICATION BY MASS SPECTROMETRY</scope>
</reference>
<protein>
    <recommendedName>
        <fullName>ATPase-like fidgetin</fullName>
    </recommendedName>
    <alternativeName>
        <fullName>Protein sur2</fullName>
    </alternativeName>
</protein>
<organism>
    <name type="scientific">Schizosaccharomyces pombe (strain 972 / ATCC 24843)</name>
    <name type="common">Fission yeast</name>
    <dbReference type="NCBI Taxonomy" id="284812"/>
    <lineage>
        <taxon>Eukaryota</taxon>
        <taxon>Fungi</taxon>
        <taxon>Dikarya</taxon>
        <taxon>Ascomycota</taxon>
        <taxon>Taphrinomycotina</taxon>
        <taxon>Schizosaccharomycetes</taxon>
        <taxon>Schizosaccharomycetales</taxon>
        <taxon>Schizosaccharomycetaceae</taxon>
        <taxon>Schizosaccharomyces</taxon>
    </lineage>
</organism>
<gene>
    <name type="primary">alf1</name>
    <name type="synonym">sur2</name>
    <name type="ORF">SPBC947.01</name>
</gene>
<evidence type="ECO:0000255" key="1"/>
<evidence type="ECO:0000256" key="2">
    <source>
        <dbReference type="SAM" id="MobiDB-lite"/>
    </source>
</evidence>
<evidence type="ECO:0000269" key="3">
    <source>
    </source>
</evidence>
<evidence type="ECO:0000269" key="4">
    <source>
    </source>
</evidence>
<evidence type="ECO:0000305" key="5"/>
<dbReference type="EMBL" id="CU329671">
    <property type="protein sequence ID" value="CAA17029.1"/>
    <property type="molecule type" value="Genomic_DNA"/>
</dbReference>
<dbReference type="PIR" id="T40781">
    <property type="entry name" value="T40781"/>
</dbReference>
<dbReference type="RefSeq" id="NP_595275.1">
    <property type="nucleotide sequence ID" value="NM_001021182.2"/>
</dbReference>
<dbReference type="SMR" id="O43078"/>
<dbReference type="BioGRID" id="277763">
    <property type="interactions" value="43"/>
</dbReference>
<dbReference type="STRING" id="284812.O43078"/>
<dbReference type="iPTMnet" id="O43078"/>
<dbReference type="SwissPalm" id="O43078"/>
<dbReference type="PaxDb" id="4896-SPBC947.01.1"/>
<dbReference type="EnsemblFungi" id="SPBC947.01.1">
    <property type="protein sequence ID" value="SPBC947.01.1:pep"/>
    <property type="gene ID" value="SPBC947.01"/>
</dbReference>
<dbReference type="GeneID" id="2541249"/>
<dbReference type="KEGG" id="spo:2541249"/>
<dbReference type="PomBase" id="SPBC947.01"/>
<dbReference type="VEuPathDB" id="FungiDB:SPBC947.01"/>
<dbReference type="eggNOG" id="KOG0740">
    <property type="taxonomic scope" value="Eukaryota"/>
</dbReference>
<dbReference type="HOGENOM" id="CLU_000688_15_1_1"/>
<dbReference type="InParanoid" id="O43078"/>
<dbReference type="OMA" id="NGLYDNC"/>
<dbReference type="PRO" id="PR:O43078"/>
<dbReference type="Proteomes" id="UP000002485">
    <property type="component" value="Chromosome II"/>
</dbReference>
<dbReference type="GO" id="GO:0032153">
    <property type="term" value="C:cell division site"/>
    <property type="evidence" value="ECO:0007005"/>
    <property type="project" value="PomBase"/>
</dbReference>
<dbReference type="GO" id="GO:0051286">
    <property type="term" value="C:cell tip"/>
    <property type="evidence" value="ECO:0007005"/>
    <property type="project" value="PomBase"/>
</dbReference>
<dbReference type="GO" id="GO:0036391">
    <property type="term" value="C:medial cortex septin ring"/>
    <property type="evidence" value="ECO:0000314"/>
    <property type="project" value="PomBase"/>
</dbReference>
<dbReference type="GO" id="GO:0035841">
    <property type="term" value="C:new growing cell tip"/>
    <property type="evidence" value="ECO:0000314"/>
    <property type="project" value="PomBase"/>
</dbReference>
<dbReference type="GO" id="GO:0005634">
    <property type="term" value="C:nucleus"/>
    <property type="evidence" value="ECO:0007005"/>
    <property type="project" value="PomBase"/>
</dbReference>
<dbReference type="GO" id="GO:0035840">
    <property type="term" value="C:old growing cell tip"/>
    <property type="evidence" value="ECO:0000314"/>
    <property type="project" value="PomBase"/>
</dbReference>
<dbReference type="GO" id="GO:0005524">
    <property type="term" value="F:ATP binding"/>
    <property type="evidence" value="ECO:0000255"/>
    <property type="project" value="PomBase"/>
</dbReference>
<dbReference type="GO" id="GO:0016887">
    <property type="term" value="F:ATP hydrolysis activity"/>
    <property type="evidence" value="ECO:0000318"/>
    <property type="project" value="GO_Central"/>
</dbReference>
<dbReference type="GO" id="GO:0008568">
    <property type="term" value="F:microtubule severing ATPase activity"/>
    <property type="evidence" value="ECO:0000250"/>
    <property type="project" value="PomBase"/>
</dbReference>
<dbReference type="GO" id="GO:0001578">
    <property type="term" value="P:microtubule bundle formation"/>
    <property type="evidence" value="ECO:0000250"/>
    <property type="project" value="PomBase"/>
</dbReference>
<dbReference type="GO" id="GO:0051013">
    <property type="term" value="P:microtubule severing"/>
    <property type="evidence" value="ECO:0000250"/>
    <property type="project" value="PomBase"/>
</dbReference>
<dbReference type="CDD" id="cd19509">
    <property type="entry name" value="RecA-like_VPS4-like"/>
    <property type="match status" value="1"/>
</dbReference>
<dbReference type="FunFam" id="1.10.8.60:FF:000022">
    <property type="entry name" value="Fidgetin like 1"/>
    <property type="match status" value="1"/>
</dbReference>
<dbReference type="FunFam" id="3.40.50.300:FF:000093">
    <property type="entry name" value="Fidgetin-like 1"/>
    <property type="match status" value="1"/>
</dbReference>
<dbReference type="Gene3D" id="1.10.8.60">
    <property type="match status" value="1"/>
</dbReference>
<dbReference type="Gene3D" id="3.40.50.300">
    <property type="entry name" value="P-loop containing nucleotide triphosphate hydrolases"/>
    <property type="match status" value="1"/>
</dbReference>
<dbReference type="InterPro" id="IPR003593">
    <property type="entry name" value="AAA+_ATPase"/>
</dbReference>
<dbReference type="InterPro" id="IPR041569">
    <property type="entry name" value="AAA_lid_3"/>
</dbReference>
<dbReference type="InterPro" id="IPR003959">
    <property type="entry name" value="ATPase_AAA_core"/>
</dbReference>
<dbReference type="InterPro" id="IPR003960">
    <property type="entry name" value="ATPase_AAA_CS"/>
</dbReference>
<dbReference type="InterPro" id="IPR050304">
    <property type="entry name" value="MT-severing_AAA_ATPase"/>
</dbReference>
<dbReference type="InterPro" id="IPR027417">
    <property type="entry name" value="P-loop_NTPase"/>
</dbReference>
<dbReference type="InterPro" id="IPR015415">
    <property type="entry name" value="Spast_Vps4_C"/>
</dbReference>
<dbReference type="PANTHER" id="PTHR23074">
    <property type="entry name" value="AAA DOMAIN-CONTAINING"/>
    <property type="match status" value="1"/>
</dbReference>
<dbReference type="PANTHER" id="PTHR23074:SF169">
    <property type="entry name" value="ATPASE-LIKE FIDGETIN"/>
    <property type="match status" value="1"/>
</dbReference>
<dbReference type="Pfam" id="PF00004">
    <property type="entry name" value="AAA"/>
    <property type="match status" value="1"/>
</dbReference>
<dbReference type="Pfam" id="PF17862">
    <property type="entry name" value="AAA_lid_3"/>
    <property type="match status" value="1"/>
</dbReference>
<dbReference type="Pfam" id="PF09336">
    <property type="entry name" value="Vps4_C"/>
    <property type="match status" value="1"/>
</dbReference>
<dbReference type="SMART" id="SM00382">
    <property type="entry name" value="AAA"/>
    <property type="match status" value="1"/>
</dbReference>
<dbReference type="SUPFAM" id="SSF52540">
    <property type="entry name" value="P-loop containing nucleoside triphosphate hydrolases"/>
    <property type="match status" value="1"/>
</dbReference>
<dbReference type="PROSITE" id="PS00674">
    <property type="entry name" value="AAA"/>
    <property type="match status" value="1"/>
</dbReference>
<name>ALF1_SCHPO</name>
<sequence length="660" mass="71733">MDSDLDRILPIASRALLCEGNRDWAGAYVSYCKVLEEMKKSSAARDRMGLGPLTGAEACSWNGLYDNCLSKASKLRKTILESEMERQNYQLAAKLSKKAPVDLHPLRPVRSQTPAYTPMTTRMMYRQTRGAQSEVNLSTPKQIYSKHSPPSTSTSSIVSSSYGDAPSYLAPSKPNRSPPLKPEDPFASFNSSASAIAAASKSAAASASALSSDTGRSATMNSTTFPTAMKSQSTTKPTLSNSVSSPSIQVSNNQNANNSTPLSFHAPIPPLHVPAVPLTSASHSSSDGKSRKHPSPYKPYLNSSHDTLGSSTRPSSADTAGSPATSPPATADSKTIVSKTISASTTQQTEPLQQTTPSSDFEYAIMNEIISNHEPVYWSDIAGLDDAKNSLKEAVIYPFLRPELFQGLREPVQGMLLFGPPGTGKTMLARAVATEAKATFFSISASSLTSKYLGDSEKLVRALFEVAKRQTCSVIFVDEIDSILSARNDSGNEHESSRRLKTEFLIQWSSLTNAAPDKQTGHSPRVLVLAATNLPWCIDEAARRRFVKRTYIPLPEKETRYKHLSHLLHNQVHCLTEEDLEELVNLTEGYSGSDITALAKDAAMGPLRNLGDALLTTSAEMIPPISLNHFKASLRTIRPSVSQEGIHRYEEWNKQFGSQR</sequence>
<comment type="subcellular location">
    <subcellularLocation>
        <location evidence="3">Nucleus</location>
    </subcellularLocation>
</comment>
<comment type="similarity">
    <text evidence="5">Belongs to the AAA ATPase family.</text>
</comment>